<accession>Q0MQB8</accession>
<feature type="initiator methionine" description="Removed" evidence="2">
    <location>
        <position position="1"/>
    </location>
</feature>
<feature type="chain" id="PRO_0000251816" description="NADH dehydrogenase [ubiquinone] 1 alpha subcomplex subunit 11">
    <location>
        <begin position="2"/>
        <end position="141"/>
    </location>
</feature>
<feature type="transmembrane region" description="Helical" evidence="3">
    <location>
        <begin position="21"/>
        <end position="43"/>
    </location>
</feature>
<feature type="transmembrane region" description="Helical" evidence="3">
    <location>
        <begin position="58"/>
        <end position="80"/>
    </location>
</feature>
<feature type="modified residue" description="N-acetylalanine" evidence="2">
    <location>
        <position position="2"/>
    </location>
</feature>
<organism>
    <name type="scientific">Pongo pygmaeus</name>
    <name type="common">Bornean orangutan</name>
    <dbReference type="NCBI Taxonomy" id="9600"/>
    <lineage>
        <taxon>Eukaryota</taxon>
        <taxon>Metazoa</taxon>
        <taxon>Chordata</taxon>
        <taxon>Craniata</taxon>
        <taxon>Vertebrata</taxon>
        <taxon>Euteleostomi</taxon>
        <taxon>Mammalia</taxon>
        <taxon>Eutheria</taxon>
        <taxon>Euarchontoglires</taxon>
        <taxon>Primates</taxon>
        <taxon>Haplorrhini</taxon>
        <taxon>Catarrhini</taxon>
        <taxon>Hominidae</taxon>
        <taxon>Pongo</taxon>
    </lineage>
</organism>
<name>NDUAB_PONPY</name>
<sequence>MAPKVFRQYWDIPDGTDCHRKAYSTTSIASVAGLTAAAYRVTLNPPGTFLEGVAKVGQYTFTAAAVGAVFGLTTCISAHVREKPDDPLNYFLGGCAGGLTLGARTHNYGIGAAACVYFGIAASLVKMGQLEGWEVFAKPKV</sequence>
<reference key="1">
    <citation type="journal article" date="2006" name="Gene">
        <title>Adaptive selection of mitochondrial complex I subunits during primate radiation.</title>
        <authorList>
            <person name="Mishmar D."/>
            <person name="Ruiz-Pesini E."/>
            <person name="Mondragon-Palomino M."/>
            <person name="Procaccio V."/>
            <person name="Gaut B."/>
            <person name="Wallace D.C."/>
        </authorList>
    </citation>
    <scope>NUCLEOTIDE SEQUENCE [MRNA]</scope>
</reference>
<protein>
    <recommendedName>
        <fullName>NADH dehydrogenase [ubiquinone] 1 alpha subcomplex subunit 11</fullName>
    </recommendedName>
    <alternativeName>
        <fullName>Complex I-B14.7</fullName>
        <shortName>CI-B14.7</shortName>
    </alternativeName>
    <alternativeName>
        <fullName>NADH-ubiquinone oxidoreductase subunit B14.7</fullName>
    </alternativeName>
</protein>
<evidence type="ECO:0000250" key="1">
    <source>
        <dbReference type="UniProtKB" id="Q86Y39"/>
    </source>
</evidence>
<evidence type="ECO:0000250" key="2">
    <source>
        <dbReference type="UniProtKB" id="Q8HXG6"/>
    </source>
</evidence>
<evidence type="ECO:0000255" key="3"/>
<evidence type="ECO:0000305" key="4"/>
<proteinExistence type="evidence at transcript level"/>
<keyword id="KW-0007">Acetylation</keyword>
<keyword id="KW-0249">Electron transport</keyword>
<keyword id="KW-0472">Membrane</keyword>
<keyword id="KW-0496">Mitochondrion</keyword>
<keyword id="KW-0999">Mitochondrion inner membrane</keyword>
<keyword id="KW-0679">Respiratory chain</keyword>
<keyword id="KW-0812">Transmembrane</keyword>
<keyword id="KW-1133">Transmembrane helix</keyword>
<keyword id="KW-0813">Transport</keyword>
<dbReference type="EMBL" id="DQ885716">
    <property type="protein sequence ID" value="ABH12225.1"/>
    <property type="molecule type" value="mRNA"/>
</dbReference>
<dbReference type="SMR" id="Q0MQB8"/>
<dbReference type="GO" id="GO:0005743">
    <property type="term" value="C:mitochondrial inner membrane"/>
    <property type="evidence" value="ECO:0007669"/>
    <property type="project" value="UniProtKB-SubCell"/>
</dbReference>
<dbReference type="GO" id="GO:0045271">
    <property type="term" value="C:respiratory chain complex I"/>
    <property type="evidence" value="ECO:0000250"/>
    <property type="project" value="UniProtKB"/>
</dbReference>
<dbReference type="GO" id="GO:0006120">
    <property type="term" value="P:mitochondrial electron transport, NADH to ubiquinone"/>
    <property type="evidence" value="ECO:0007669"/>
    <property type="project" value="InterPro"/>
</dbReference>
<dbReference type="InterPro" id="IPR039205">
    <property type="entry name" value="NDUFA11"/>
</dbReference>
<dbReference type="PANTHER" id="PTHR21382:SF1">
    <property type="entry name" value="NADH DEHYDROGENASE [UBIQUINONE] 1 ALPHA SUBCOMPLEX SUBUNIT 11"/>
    <property type="match status" value="1"/>
</dbReference>
<dbReference type="PANTHER" id="PTHR21382">
    <property type="entry name" value="NADH-UBIQUINONE OXIDOREDUCTASE SUBUNIT"/>
    <property type="match status" value="1"/>
</dbReference>
<gene>
    <name type="primary">NDUFA11</name>
</gene>
<comment type="function">
    <text evidence="1">Accessory subunit of the mitochondrial membrane respiratory chain NADH dehydrogenase (Complex I), that is believed not to be involved in catalysis. Complex I functions in the transfer of electrons from NADH to the respiratory chain. The immediate electron acceptor for the enzyme is believed to be ubiquinone.</text>
</comment>
<comment type="subunit">
    <text evidence="1">Complex I is composed of 45 different subunits.</text>
</comment>
<comment type="subcellular location">
    <subcellularLocation>
        <location evidence="1">Mitochondrion inner membrane</location>
        <topology evidence="3">Multi-pass membrane protein</topology>
        <orientation evidence="1">Matrix side</orientation>
    </subcellularLocation>
</comment>
<comment type="similarity">
    <text evidence="4">Belongs to the complex I NDUFA11 subunit family.</text>
</comment>